<accession>B7MU19</accession>
<organism>
    <name type="scientific">Escherichia coli O81 (strain ED1a)</name>
    <dbReference type="NCBI Taxonomy" id="585397"/>
    <lineage>
        <taxon>Bacteria</taxon>
        <taxon>Pseudomonadati</taxon>
        <taxon>Pseudomonadota</taxon>
        <taxon>Gammaproteobacteria</taxon>
        <taxon>Enterobacterales</taxon>
        <taxon>Enterobacteriaceae</taxon>
        <taxon>Escherichia</taxon>
    </lineage>
</organism>
<proteinExistence type="inferred from homology"/>
<name>YCHJ_ECO81</name>
<reference key="1">
    <citation type="journal article" date="2009" name="PLoS Genet.">
        <title>Organised genome dynamics in the Escherichia coli species results in highly diverse adaptive paths.</title>
        <authorList>
            <person name="Touchon M."/>
            <person name="Hoede C."/>
            <person name="Tenaillon O."/>
            <person name="Barbe V."/>
            <person name="Baeriswyl S."/>
            <person name="Bidet P."/>
            <person name="Bingen E."/>
            <person name="Bonacorsi S."/>
            <person name="Bouchier C."/>
            <person name="Bouvet O."/>
            <person name="Calteau A."/>
            <person name="Chiapello H."/>
            <person name="Clermont O."/>
            <person name="Cruveiller S."/>
            <person name="Danchin A."/>
            <person name="Diard M."/>
            <person name="Dossat C."/>
            <person name="Karoui M.E."/>
            <person name="Frapy E."/>
            <person name="Garry L."/>
            <person name="Ghigo J.M."/>
            <person name="Gilles A.M."/>
            <person name="Johnson J."/>
            <person name="Le Bouguenec C."/>
            <person name="Lescat M."/>
            <person name="Mangenot S."/>
            <person name="Martinez-Jehanne V."/>
            <person name="Matic I."/>
            <person name="Nassif X."/>
            <person name="Oztas S."/>
            <person name="Petit M.A."/>
            <person name="Pichon C."/>
            <person name="Rouy Z."/>
            <person name="Ruf C.S."/>
            <person name="Schneider D."/>
            <person name="Tourret J."/>
            <person name="Vacherie B."/>
            <person name="Vallenet D."/>
            <person name="Medigue C."/>
            <person name="Rocha E.P.C."/>
            <person name="Denamur E."/>
        </authorList>
    </citation>
    <scope>NUCLEOTIDE SEQUENCE [LARGE SCALE GENOMIC DNA]</scope>
    <source>
        <strain>ED1a</strain>
    </source>
</reference>
<gene>
    <name evidence="1" type="primary">ychJ</name>
    <name type="ordered locus">ECED1_1384</name>
</gene>
<feature type="chain" id="PRO_1000200399" description="UPF0225 protein YchJ">
    <location>
        <begin position="1"/>
        <end position="152"/>
    </location>
</feature>
<dbReference type="EMBL" id="CU928162">
    <property type="protein sequence ID" value="CAR07583.1"/>
    <property type="molecule type" value="Genomic_DNA"/>
</dbReference>
<dbReference type="RefSeq" id="WP_012601471.1">
    <property type="nucleotide sequence ID" value="NC_011745.1"/>
</dbReference>
<dbReference type="SMR" id="B7MU19"/>
<dbReference type="KEGG" id="ecq:ECED1_1384"/>
<dbReference type="HOGENOM" id="CLU_099590_0_0_6"/>
<dbReference type="Proteomes" id="UP000000748">
    <property type="component" value="Chromosome"/>
</dbReference>
<dbReference type="Gene3D" id="3.10.450.50">
    <property type="match status" value="1"/>
</dbReference>
<dbReference type="HAMAP" id="MF_00612">
    <property type="entry name" value="UPF0225"/>
    <property type="match status" value="1"/>
</dbReference>
<dbReference type="InterPro" id="IPR032710">
    <property type="entry name" value="NTF2-like_dom_sf"/>
</dbReference>
<dbReference type="InterPro" id="IPR004027">
    <property type="entry name" value="SEC_C_motif"/>
</dbReference>
<dbReference type="InterPro" id="IPR023006">
    <property type="entry name" value="UPF0225"/>
</dbReference>
<dbReference type="InterPro" id="IPR048469">
    <property type="entry name" value="YchJ-like_M"/>
</dbReference>
<dbReference type="NCBIfam" id="NF002449">
    <property type="entry name" value="PRK01617.1"/>
    <property type="match status" value="1"/>
</dbReference>
<dbReference type="NCBIfam" id="NF002486">
    <property type="entry name" value="PRK01752.1"/>
    <property type="match status" value="1"/>
</dbReference>
<dbReference type="PANTHER" id="PTHR33747:SF1">
    <property type="entry name" value="ADENYLATE CYCLASE-ASSOCIATED CAP C-TERMINAL DOMAIN-CONTAINING PROTEIN"/>
    <property type="match status" value="1"/>
</dbReference>
<dbReference type="PANTHER" id="PTHR33747">
    <property type="entry name" value="UPF0225 PROTEIN SCO1677"/>
    <property type="match status" value="1"/>
</dbReference>
<dbReference type="Pfam" id="PF02810">
    <property type="entry name" value="SEC-C"/>
    <property type="match status" value="2"/>
</dbReference>
<dbReference type="Pfam" id="PF17775">
    <property type="entry name" value="YchJ_M-like"/>
    <property type="match status" value="1"/>
</dbReference>
<dbReference type="SUPFAM" id="SSF54427">
    <property type="entry name" value="NTF2-like"/>
    <property type="match status" value="1"/>
</dbReference>
<dbReference type="SUPFAM" id="SSF103642">
    <property type="entry name" value="Sec-C motif"/>
    <property type="match status" value="1"/>
</dbReference>
<comment type="similarity">
    <text evidence="1">Belongs to the UPF0225 family.</text>
</comment>
<sequence>MSQLCPCGSAVEYSLCCHPYVFGEKVAPDPEHLMRSRYCAFVMQDADYLIKTWHPSCGAAALRAELIAGFAHTEWLGLTVFEHCWQDGGNIGFVSFVARFTEGGKTGAIIERSRFLKENGQWYYIDGTRPQFGRNDPCPCGSGKKFKKCCGQ</sequence>
<protein>
    <recommendedName>
        <fullName evidence="1">UPF0225 protein YchJ</fullName>
    </recommendedName>
</protein>
<evidence type="ECO:0000255" key="1">
    <source>
        <dbReference type="HAMAP-Rule" id="MF_00612"/>
    </source>
</evidence>